<keyword id="KW-1003">Cell membrane</keyword>
<keyword id="KW-0472">Membrane</keyword>
<keyword id="KW-1185">Reference proteome</keyword>
<keyword id="KW-0812">Transmembrane</keyword>
<keyword id="KW-1133">Transmembrane helix</keyword>
<organism>
    <name type="scientific">Bacillus subtilis (strain 168)</name>
    <dbReference type="NCBI Taxonomy" id="224308"/>
    <lineage>
        <taxon>Bacteria</taxon>
        <taxon>Bacillati</taxon>
        <taxon>Bacillota</taxon>
        <taxon>Bacilli</taxon>
        <taxon>Bacillales</taxon>
        <taxon>Bacillaceae</taxon>
        <taxon>Bacillus</taxon>
    </lineage>
</organism>
<protein>
    <recommendedName>
        <fullName>Uncharacterized membrane protein YjcL</fullName>
    </recommendedName>
</protein>
<feature type="chain" id="PRO_0000390298" description="Uncharacterized membrane protein YjcL">
    <location>
        <begin position="1"/>
        <end position="396"/>
    </location>
</feature>
<feature type="transmembrane region" description="Helical" evidence="1">
    <location>
        <begin position="7"/>
        <end position="27"/>
    </location>
</feature>
<feature type="transmembrane region" description="Helical" evidence="1">
    <location>
        <begin position="36"/>
        <end position="56"/>
    </location>
</feature>
<feature type="transmembrane region" description="Helical" evidence="1">
    <location>
        <begin position="62"/>
        <end position="82"/>
    </location>
</feature>
<feature type="transmembrane region" description="Helical" evidence="1">
    <location>
        <begin position="94"/>
        <end position="114"/>
    </location>
</feature>
<feature type="transmembrane region" description="Helical" evidence="1">
    <location>
        <begin position="159"/>
        <end position="179"/>
    </location>
</feature>
<feature type="transmembrane region" description="Helical" evidence="1">
    <location>
        <begin position="218"/>
        <end position="238"/>
    </location>
</feature>
<feature type="transmembrane region" description="Helical" evidence="1">
    <location>
        <begin position="250"/>
        <end position="270"/>
    </location>
</feature>
<feature type="transmembrane region" description="Helical" evidence="1">
    <location>
        <begin position="285"/>
        <end position="305"/>
    </location>
</feature>
<feature type="transmembrane region" description="Helical" evidence="1">
    <location>
        <begin position="310"/>
        <end position="330"/>
    </location>
</feature>
<feature type="transmembrane region" description="Helical" evidence="1">
    <location>
        <begin position="340"/>
        <end position="360"/>
    </location>
</feature>
<feature type="transmembrane region" description="Helical" evidence="1">
    <location>
        <begin position="367"/>
        <end position="387"/>
    </location>
</feature>
<accession>O31634</accession>
<sequence length="396" mass="43321">MHSLISSDDVWVLWGFIAVWAAVSIGLEQRFKWASAVSGAIIALAGAMVFTNVGVLPVESPVYDTVWSYVVPLAIPLLLFQINVRQIFKESRRLLFIFLISSVGTVLGSILAFFLLKQHIPYLDKIGGMISASYIGGGVNFAAMAAKFETPGEYVSATVVADNFMMALLFFILISIPALKWFQRHYAMPFEEKVKADGNSGNSAESYWKRKDISLKDIAFNAGAAFALVAVSMKVSGYFKSIFSHPLLTGTLGDQYLVLTSLTVLIIFLFPRFFERLNGSQELGTFLIYLFFVVIGIPADLRLIVTNAPLILLFVFIIAISNLAVSLAAGKLFRVRLEEILLAVNATVGGPTTAAAMAIAKGWRELVAPIMLVGTLGYLIGNYVGTFMGNWFSSFL</sequence>
<name>YJCL_BACSU</name>
<gene>
    <name type="primary">yjcL</name>
    <name type="ordered locus">BSU11900</name>
</gene>
<proteinExistence type="predicted"/>
<comment type="subcellular location">
    <subcellularLocation>
        <location evidence="2">Cell membrane</location>
        <topology evidence="2">Multi-pass membrane protein</topology>
    </subcellularLocation>
</comment>
<reference key="1">
    <citation type="journal article" date="1997" name="Nature">
        <title>The complete genome sequence of the Gram-positive bacterium Bacillus subtilis.</title>
        <authorList>
            <person name="Kunst F."/>
            <person name="Ogasawara N."/>
            <person name="Moszer I."/>
            <person name="Albertini A.M."/>
            <person name="Alloni G."/>
            <person name="Azevedo V."/>
            <person name="Bertero M.G."/>
            <person name="Bessieres P."/>
            <person name="Bolotin A."/>
            <person name="Borchert S."/>
            <person name="Borriss R."/>
            <person name="Boursier L."/>
            <person name="Brans A."/>
            <person name="Braun M."/>
            <person name="Brignell S.C."/>
            <person name="Bron S."/>
            <person name="Brouillet S."/>
            <person name="Bruschi C.V."/>
            <person name="Caldwell B."/>
            <person name="Capuano V."/>
            <person name="Carter N.M."/>
            <person name="Choi S.-K."/>
            <person name="Codani J.-J."/>
            <person name="Connerton I.F."/>
            <person name="Cummings N.J."/>
            <person name="Daniel R.A."/>
            <person name="Denizot F."/>
            <person name="Devine K.M."/>
            <person name="Duesterhoeft A."/>
            <person name="Ehrlich S.D."/>
            <person name="Emmerson P.T."/>
            <person name="Entian K.-D."/>
            <person name="Errington J."/>
            <person name="Fabret C."/>
            <person name="Ferrari E."/>
            <person name="Foulger D."/>
            <person name="Fritz C."/>
            <person name="Fujita M."/>
            <person name="Fujita Y."/>
            <person name="Fuma S."/>
            <person name="Galizzi A."/>
            <person name="Galleron N."/>
            <person name="Ghim S.-Y."/>
            <person name="Glaser P."/>
            <person name="Goffeau A."/>
            <person name="Golightly E.J."/>
            <person name="Grandi G."/>
            <person name="Guiseppi G."/>
            <person name="Guy B.J."/>
            <person name="Haga K."/>
            <person name="Haiech J."/>
            <person name="Harwood C.R."/>
            <person name="Henaut A."/>
            <person name="Hilbert H."/>
            <person name="Holsappel S."/>
            <person name="Hosono S."/>
            <person name="Hullo M.-F."/>
            <person name="Itaya M."/>
            <person name="Jones L.-M."/>
            <person name="Joris B."/>
            <person name="Karamata D."/>
            <person name="Kasahara Y."/>
            <person name="Klaerr-Blanchard M."/>
            <person name="Klein C."/>
            <person name="Kobayashi Y."/>
            <person name="Koetter P."/>
            <person name="Koningstein G."/>
            <person name="Krogh S."/>
            <person name="Kumano M."/>
            <person name="Kurita K."/>
            <person name="Lapidus A."/>
            <person name="Lardinois S."/>
            <person name="Lauber J."/>
            <person name="Lazarevic V."/>
            <person name="Lee S.-M."/>
            <person name="Levine A."/>
            <person name="Liu H."/>
            <person name="Masuda S."/>
            <person name="Mauel C."/>
            <person name="Medigue C."/>
            <person name="Medina N."/>
            <person name="Mellado R.P."/>
            <person name="Mizuno M."/>
            <person name="Moestl D."/>
            <person name="Nakai S."/>
            <person name="Noback M."/>
            <person name="Noone D."/>
            <person name="O'Reilly M."/>
            <person name="Ogawa K."/>
            <person name="Ogiwara A."/>
            <person name="Oudega B."/>
            <person name="Park S.-H."/>
            <person name="Parro V."/>
            <person name="Pohl T.M."/>
            <person name="Portetelle D."/>
            <person name="Porwollik S."/>
            <person name="Prescott A.M."/>
            <person name="Presecan E."/>
            <person name="Pujic P."/>
            <person name="Purnelle B."/>
            <person name="Rapoport G."/>
            <person name="Rey M."/>
            <person name="Reynolds S."/>
            <person name="Rieger M."/>
            <person name="Rivolta C."/>
            <person name="Rocha E."/>
            <person name="Roche B."/>
            <person name="Rose M."/>
            <person name="Sadaie Y."/>
            <person name="Sato T."/>
            <person name="Scanlan E."/>
            <person name="Schleich S."/>
            <person name="Schroeter R."/>
            <person name="Scoffone F."/>
            <person name="Sekiguchi J."/>
            <person name="Sekowska A."/>
            <person name="Seror S.J."/>
            <person name="Serror P."/>
            <person name="Shin B.-S."/>
            <person name="Soldo B."/>
            <person name="Sorokin A."/>
            <person name="Tacconi E."/>
            <person name="Takagi T."/>
            <person name="Takahashi H."/>
            <person name="Takemaru K."/>
            <person name="Takeuchi M."/>
            <person name="Tamakoshi A."/>
            <person name="Tanaka T."/>
            <person name="Terpstra P."/>
            <person name="Tognoni A."/>
            <person name="Tosato V."/>
            <person name="Uchiyama S."/>
            <person name="Vandenbol M."/>
            <person name="Vannier F."/>
            <person name="Vassarotti A."/>
            <person name="Viari A."/>
            <person name="Wambutt R."/>
            <person name="Wedler E."/>
            <person name="Wedler H."/>
            <person name="Weitzenegger T."/>
            <person name="Winters P."/>
            <person name="Wipat A."/>
            <person name="Yamamoto H."/>
            <person name="Yamane K."/>
            <person name="Yasumoto K."/>
            <person name="Yata K."/>
            <person name="Yoshida K."/>
            <person name="Yoshikawa H.-F."/>
            <person name="Zumstein E."/>
            <person name="Yoshikawa H."/>
            <person name="Danchin A."/>
        </authorList>
    </citation>
    <scope>NUCLEOTIDE SEQUENCE [LARGE SCALE GENOMIC DNA]</scope>
    <source>
        <strain>168</strain>
    </source>
</reference>
<evidence type="ECO:0000255" key="1"/>
<evidence type="ECO:0000305" key="2"/>
<dbReference type="EMBL" id="AL009126">
    <property type="protein sequence ID" value="CAB13047.1"/>
    <property type="molecule type" value="Genomic_DNA"/>
</dbReference>
<dbReference type="PIR" id="D69847">
    <property type="entry name" value="D69847"/>
</dbReference>
<dbReference type="RefSeq" id="NP_389072.1">
    <property type="nucleotide sequence ID" value="NC_000964.3"/>
</dbReference>
<dbReference type="RefSeq" id="WP_009967022.1">
    <property type="nucleotide sequence ID" value="NZ_OZ025638.1"/>
</dbReference>
<dbReference type="FunCoup" id="O31634">
    <property type="interactions" value="56"/>
</dbReference>
<dbReference type="STRING" id="224308.BSU11900"/>
<dbReference type="PaxDb" id="224308-BSU11900"/>
<dbReference type="EnsemblBacteria" id="CAB13047">
    <property type="protein sequence ID" value="CAB13047"/>
    <property type="gene ID" value="BSU_11900"/>
</dbReference>
<dbReference type="GeneID" id="936434"/>
<dbReference type="KEGG" id="bsu:BSU11900"/>
<dbReference type="PATRIC" id="fig|224308.179.peg.1282"/>
<dbReference type="eggNOG" id="COG5505">
    <property type="taxonomic scope" value="Bacteria"/>
</dbReference>
<dbReference type="InParanoid" id="O31634"/>
<dbReference type="OrthoDB" id="653763at2"/>
<dbReference type="PhylomeDB" id="O31634"/>
<dbReference type="BioCyc" id="BSUB:BSU11900-MONOMER"/>
<dbReference type="Proteomes" id="UP000001570">
    <property type="component" value="Chromosome"/>
</dbReference>
<dbReference type="GO" id="GO:0005886">
    <property type="term" value="C:plasma membrane"/>
    <property type="evidence" value="ECO:0007669"/>
    <property type="project" value="UniProtKB-SubCell"/>
</dbReference>
<dbReference type="InterPro" id="IPR008537">
    <property type="entry name" value="DUF819"/>
</dbReference>
<dbReference type="PANTHER" id="PTHR34289:SF8">
    <property type="entry name" value="DUF819 DOMAIN-CONTAINING PROTEIN"/>
    <property type="match status" value="1"/>
</dbReference>
<dbReference type="PANTHER" id="PTHR34289">
    <property type="entry name" value="PROTEIN, PUTATIVE (DUF819)-RELATED"/>
    <property type="match status" value="1"/>
</dbReference>
<dbReference type="Pfam" id="PF05684">
    <property type="entry name" value="DUF819"/>
    <property type="match status" value="1"/>
</dbReference>